<protein>
    <recommendedName>
        <fullName>Exportin-T</fullName>
    </recommendedName>
    <alternativeName>
        <fullName>Exportin(tRNA)</fullName>
    </alternativeName>
    <alternativeName>
        <fullName>Karyopherin-beta</fullName>
    </alternativeName>
    <alternativeName>
        <fullName>tRNA exportin</fullName>
    </alternativeName>
</protein>
<sequence length="1037" mass="115965">MEEQVANAIEIASNPSADPALKTQAFEFVNQLRSDPSGWQVCLSLFTQTPQRSGIVRHVALEVVNSAAQGGLIDLQALAYVKDGLLAYLRQVYGQDAGASDPPNIQNKIAQTITFLFSALYASGWESFFDDLLSLTHKSPSSTTRDNASGIIFYLRVINSIHDEIGDVLVSRSRNEQDKANALKDLIRQRDMQKITSSWQQILSEWRDGNDVIVEMCLKAVGSWVSWIDIGLVVNQTMLDLLFQQLGRAQKEDLRQGEEKVRDAAVDVFTEIIGKKMKPEDKIDMIIFLNLDTIVSQLSNSPPLHGNRFTFKYDTDLAETVAKLVNITVIDIVRALEQEGVSAECKEKANGLLQAFLPHILRYFSDEYDEVCSTVIPCVSDLLTYLRRIAKVNPALASQHSSILLPILKAIIAKMRYDETSSWGEEDEQTDEAEFQELRKRLGILQQMIASVNEQLYMEAVSEMVATTFENLRQSGSQMDWRDLDLALHEMFLFGDLAVKAGSLYTKSNPNNQAAERLIEMMLRMVESDIRSFTHPATQLQYMEICVRYSSFFHHHTHLIPGVLENFLQLVHHPIKKVKTRSWYLFQRLVKQLRQYVGNVAQTVVEALGDLLVIRAELPSEVSEGDEMSSEDHDLADAIFNSQLYLFEAVGIICSTPTVSPDKQVLYAQAVLNPIFLDMEKNLEAAKSQDERAILQIHHDIMALGTLARGFSDWMPGTNTPATLPAPEVSAAFNQVAEATLVALESLKSSFNVRTAARFAFSRLIGVLGSRILPQLPRWIDGLLTQTSSRDEMALFLRLLDQVIFGFKGEIYSILDTLLTPFLQRVFSGIADPTTGTDDEIQLAELKREYLNFLLAVLNNDLGAVIISERNQPIFETVISTIEHFSKDIDDFTTAKMAFSVLSKMSSSWGGPDVIAEASNGAPLAQAPLPGFGQFMITRFSPLCWALPSTPSFNSKDAQAKQVLAEAGGLQRTIYAKTGMEYLTYLRDRELPGMGMGAELIEEFVGALSRLDLKGFRQFFPVCLSNFHHSLDLNMNN</sequence>
<dbReference type="EMBL" id="DS027696">
    <property type="protein sequence ID" value="EAW17809.1"/>
    <property type="status" value="ALT_SEQ"/>
    <property type="molecule type" value="Genomic_DNA"/>
</dbReference>
<dbReference type="RefSeq" id="XP_001259706.1">
    <property type="nucleotide sequence ID" value="XM_001259705.1"/>
</dbReference>
<dbReference type="SMR" id="A1DEK2"/>
<dbReference type="STRING" id="331117.A1DEK2"/>
<dbReference type="EnsemblFungi" id="EAW17809">
    <property type="protein sequence ID" value="EAW17809"/>
    <property type="gene ID" value="NFIA_077460"/>
</dbReference>
<dbReference type="GeneID" id="4586368"/>
<dbReference type="KEGG" id="nfi:NFIA_077460"/>
<dbReference type="VEuPathDB" id="FungiDB:NFIA_077460"/>
<dbReference type="eggNOG" id="KOG2021">
    <property type="taxonomic scope" value="Eukaryota"/>
</dbReference>
<dbReference type="OrthoDB" id="26399at2759"/>
<dbReference type="Proteomes" id="UP000006702">
    <property type="component" value="Unassembled WGS sequence"/>
</dbReference>
<dbReference type="GO" id="GO:0005737">
    <property type="term" value="C:cytoplasm"/>
    <property type="evidence" value="ECO:0007669"/>
    <property type="project" value="UniProtKB-SubCell"/>
</dbReference>
<dbReference type="GO" id="GO:0016363">
    <property type="term" value="C:nuclear matrix"/>
    <property type="evidence" value="ECO:0007669"/>
    <property type="project" value="TreeGrafter"/>
</dbReference>
<dbReference type="GO" id="GO:0005643">
    <property type="term" value="C:nuclear pore"/>
    <property type="evidence" value="ECO:0007669"/>
    <property type="project" value="TreeGrafter"/>
</dbReference>
<dbReference type="GO" id="GO:0031267">
    <property type="term" value="F:small GTPase binding"/>
    <property type="evidence" value="ECO:0007669"/>
    <property type="project" value="InterPro"/>
</dbReference>
<dbReference type="GO" id="GO:0000049">
    <property type="term" value="F:tRNA binding"/>
    <property type="evidence" value="ECO:0007669"/>
    <property type="project" value="UniProtKB-KW"/>
</dbReference>
<dbReference type="GO" id="GO:0008033">
    <property type="term" value="P:tRNA processing"/>
    <property type="evidence" value="ECO:0007669"/>
    <property type="project" value="UniProtKB-KW"/>
</dbReference>
<dbReference type="GO" id="GO:0071528">
    <property type="term" value="P:tRNA re-export from nucleus"/>
    <property type="evidence" value="ECO:0007669"/>
    <property type="project" value="InterPro"/>
</dbReference>
<dbReference type="FunFam" id="1.25.10.10:FF:000355">
    <property type="entry name" value="Exportin-T"/>
    <property type="match status" value="1"/>
</dbReference>
<dbReference type="Gene3D" id="1.25.10.10">
    <property type="entry name" value="Leucine-rich Repeat Variant"/>
    <property type="match status" value="1"/>
</dbReference>
<dbReference type="InterPro" id="IPR011989">
    <property type="entry name" value="ARM-like"/>
</dbReference>
<dbReference type="InterPro" id="IPR016024">
    <property type="entry name" value="ARM-type_fold"/>
</dbReference>
<dbReference type="InterPro" id="IPR013598">
    <property type="entry name" value="Exportin-1/Importin-b-like"/>
</dbReference>
<dbReference type="InterPro" id="IPR045546">
    <property type="entry name" value="Exportin-T_C"/>
</dbReference>
<dbReference type="InterPro" id="IPR040017">
    <property type="entry name" value="XPOT"/>
</dbReference>
<dbReference type="PANTHER" id="PTHR15952:SF11">
    <property type="entry name" value="EXPORTIN-T"/>
    <property type="match status" value="1"/>
</dbReference>
<dbReference type="PANTHER" id="PTHR15952">
    <property type="entry name" value="EXPORTIN-T/LOS1"/>
    <property type="match status" value="1"/>
</dbReference>
<dbReference type="Pfam" id="PF19282">
    <property type="entry name" value="Exportin-T"/>
    <property type="match status" value="1"/>
</dbReference>
<dbReference type="Pfam" id="PF08389">
    <property type="entry name" value="Xpo1"/>
    <property type="match status" value="1"/>
</dbReference>
<dbReference type="SUPFAM" id="SSF48371">
    <property type="entry name" value="ARM repeat"/>
    <property type="match status" value="1"/>
</dbReference>
<name>XPOT_NEOFI</name>
<proteinExistence type="inferred from homology"/>
<feature type="chain" id="PRO_0000343099" description="Exportin-T">
    <location>
        <begin position="1"/>
        <end position="1037"/>
    </location>
</feature>
<comment type="function">
    <text evidence="1">tRNA nucleus export receptor which facilitates tRNA translocation across the nuclear pore complex. Involved in pre-tRNA splicing, probably by affecting the interaction of pre-tRNA with splicing endonuclease (By similarity).</text>
</comment>
<comment type="subcellular location">
    <subcellularLocation>
        <location evidence="1">Nucleus</location>
    </subcellularLocation>
    <subcellularLocation>
        <location evidence="1">Cytoplasm</location>
    </subcellularLocation>
    <text evidence="1">Shuttles between the nucleus and the cytoplasm.</text>
</comment>
<comment type="similarity">
    <text evidence="2">Belongs to the exportin family.</text>
</comment>
<comment type="sequence caution" evidence="2">
    <conflict type="erroneous gene model prediction">
        <sequence resource="EMBL-CDS" id="EAW17809"/>
    </conflict>
</comment>
<accession>A1DEK2</accession>
<reference key="1">
    <citation type="journal article" date="2008" name="PLoS Genet.">
        <title>Genomic islands in the pathogenic filamentous fungus Aspergillus fumigatus.</title>
        <authorList>
            <person name="Fedorova N.D."/>
            <person name="Khaldi N."/>
            <person name="Joardar V.S."/>
            <person name="Maiti R."/>
            <person name="Amedeo P."/>
            <person name="Anderson M.J."/>
            <person name="Crabtree J."/>
            <person name="Silva J.C."/>
            <person name="Badger J.H."/>
            <person name="Albarraq A."/>
            <person name="Angiuoli S."/>
            <person name="Bussey H."/>
            <person name="Bowyer P."/>
            <person name="Cotty P.J."/>
            <person name="Dyer P.S."/>
            <person name="Egan A."/>
            <person name="Galens K."/>
            <person name="Fraser-Liggett C.M."/>
            <person name="Haas B.J."/>
            <person name="Inman J.M."/>
            <person name="Kent R."/>
            <person name="Lemieux S."/>
            <person name="Malavazi I."/>
            <person name="Orvis J."/>
            <person name="Roemer T."/>
            <person name="Ronning C.M."/>
            <person name="Sundaram J.P."/>
            <person name="Sutton G."/>
            <person name="Turner G."/>
            <person name="Venter J.C."/>
            <person name="White O.R."/>
            <person name="Whitty B.R."/>
            <person name="Youngman P."/>
            <person name="Wolfe K.H."/>
            <person name="Goldman G.H."/>
            <person name="Wortman J.R."/>
            <person name="Jiang B."/>
            <person name="Denning D.W."/>
            <person name="Nierman W.C."/>
        </authorList>
    </citation>
    <scope>NUCLEOTIDE SEQUENCE [LARGE SCALE GENOMIC DNA]</scope>
    <source>
        <strain>ATCC 1020 / DSM 3700 / CBS 544.65 / FGSC A1164 / JCM 1740 / NRRL 181 / WB 181</strain>
    </source>
</reference>
<keyword id="KW-0963">Cytoplasm</keyword>
<keyword id="KW-0539">Nucleus</keyword>
<keyword id="KW-1185">Reference proteome</keyword>
<keyword id="KW-0694">RNA-binding</keyword>
<keyword id="KW-0813">Transport</keyword>
<keyword id="KW-0819">tRNA processing</keyword>
<keyword id="KW-0820">tRNA-binding</keyword>
<evidence type="ECO:0000250" key="1"/>
<evidence type="ECO:0000305" key="2"/>
<organism>
    <name type="scientific">Neosartorya fischeri (strain ATCC 1020 / DSM 3700 / CBS 544.65 / FGSC A1164 / JCM 1740 / NRRL 181 / WB 181)</name>
    <name type="common">Aspergillus fischerianus</name>
    <dbReference type="NCBI Taxonomy" id="331117"/>
    <lineage>
        <taxon>Eukaryota</taxon>
        <taxon>Fungi</taxon>
        <taxon>Dikarya</taxon>
        <taxon>Ascomycota</taxon>
        <taxon>Pezizomycotina</taxon>
        <taxon>Eurotiomycetes</taxon>
        <taxon>Eurotiomycetidae</taxon>
        <taxon>Eurotiales</taxon>
        <taxon>Aspergillaceae</taxon>
        <taxon>Aspergillus</taxon>
        <taxon>Aspergillus subgen. Fumigati</taxon>
    </lineage>
</organism>
<gene>
    <name type="primary">los1</name>
    <name type="ORF">NFIA_077460</name>
</gene>